<feature type="chain" id="PRO_0000396545" description="Lon protease">
    <location>
        <begin position="1"/>
        <end position="836"/>
    </location>
</feature>
<feature type="domain" description="Lon N-terminal" evidence="3">
    <location>
        <begin position="41"/>
        <end position="233"/>
    </location>
</feature>
<feature type="domain" description="Lon proteolytic" evidence="2">
    <location>
        <begin position="627"/>
        <end position="811"/>
    </location>
</feature>
<feature type="region of interest" description="Disordered" evidence="4">
    <location>
        <begin position="816"/>
        <end position="836"/>
    </location>
</feature>
<feature type="active site" evidence="1">
    <location>
        <position position="714"/>
    </location>
</feature>
<feature type="active site" evidence="1">
    <location>
        <position position="757"/>
    </location>
</feature>
<feature type="binding site" evidence="1">
    <location>
        <begin position="385"/>
        <end position="392"/>
    </location>
    <ligand>
        <name>ATP</name>
        <dbReference type="ChEBI" id="CHEBI:30616"/>
    </ligand>
</feature>
<organism>
    <name type="scientific">Chloroherpeton thalassium (strain ATCC 35110 / GB-78)</name>
    <dbReference type="NCBI Taxonomy" id="517418"/>
    <lineage>
        <taxon>Bacteria</taxon>
        <taxon>Pseudomonadati</taxon>
        <taxon>Chlorobiota</taxon>
        <taxon>Chlorobiia</taxon>
        <taxon>Chlorobiales</taxon>
        <taxon>Chloroherpetonaceae</taxon>
        <taxon>Chloroherpeton</taxon>
    </lineage>
</organism>
<proteinExistence type="inferred from homology"/>
<keyword id="KW-0067">ATP-binding</keyword>
<keyword id="KW-0963">Cytoplasm</keyword>
<keyword id="KW-0378">Hydrolase</keyword>
<keyword id="KW-0547">Nucleotide-binding</keyword>
<keyword id="KW-0645">Protease</keyword>
<keyword id="KW-1185">Reference proteome</keyword>
<keyword id="KW-0720">Serine protease</keyword>
<keyword id="KW-0346">Stress response</keyword>
<accession>B3QSJ7</accession>
<evidence type="ECO:0000255" key="1">
    <source>
        <dbReference type="HAMAP-Rule" id="MF_01973"/>
    </source>
</evidence>
<evidence type="ECO:0000255" key="2">
    <source>
        <dbReference type="PROSITE-ProRule" id="PRU01122"/>
    </source>
</evidence>
<evidence type="ECO:0000255" key="3">
    <source>
        <dbReference type="PROSITE-ProRule" id="PRU01123"/>
    </source>
</evidence>
<evidence type="ECO:0000256" key="4">
    <source>
        <dbReference type="SAM" id="MobiDB-lite"/>
    </source>
</evidence>
<protein>
    <recommendedName>
        <fullName evidence="1">Lon protease</fullName>
        <ecNumber evidence="1">3.4.21.53</ecNumber>
    </recommendedName>
    <alternativeName>
        <fullName evidence="1">ATP-dependent protease La</fullName>
    </alternativeName>
</protein>
<dbReference type="EC" id="3.4.21.53" evidence="1"/>
<dbReference type="EMBL" id="CP001100">
    <property type="protein sequence ID" value="ACF14044.1"/>
    <property type="molecule type" value="Genomic_DNA"/>
</dbReference>
<dbReference type="RefSeq" id="WP_012500128.1">
    <property type="nucleotide sequence ID" value="NC_011026.1"/>
</dbReference>
<dbReference type="SMR" id="B3QSJ7"/>
<dbReference type="STRING" id="517418.Ctha_1586"/>
<dbReference type="KEGG" id="cts:Ctha_1586"/>
<dbReference type="eggNOG" id="COG0466">
    <property type="taxonomic scope" value="Bacteria"/>
</dbReference>
<dbReference type="HOGENOM" id="CLU_004109_4_3_10"/>
<dbReference type="OrthoDB" id="9803599at2"/>
<dbReference type="Proteomes" id="UP000001208">
    <property type="component" value="Chromosome"/>
</dbReference>
<dbReference type="GO" id="GO:0005737">
    <property type="term" value="C:cytoplasm"/>
    <property type="evidence" value="ECO:0007669"/>
    <property type="project" value="UniProtKB-SubCell"/>
</dbReference>
<dbReference type="GO" id="GO:0005524">
    <property type="term" value="F:ATP binding"/>
    <property type="evidence" value="ECO:0007669"/>
    <property type="project" value="UniProtKB-UniRule"/>
</dbReference>
<dbReference type="GO" id="GO:0016887">
    <property type="term" value="F:ATP hydrolysis activity"/>
    <property type="evidence" value="ECO:0007669"/>
    <property type="project" value="UniProtKB-UniRule"/>
</dbReference>
<dbReference type="GO" id="GO:0004176">
    <property type="term" value="F:ATP-dependent peptidase activity"/>
    <property type="evidence" value="ECO:0007669"/>
    <property type="project" value="UniProtKB-UniRule"/>
</dbReference>
<dbReference type="GO" id="GO:0043565">
    <property type="term" value="F:sequence-specific DNA binding"/>
    <property type="evidence" value="ECO:0007669"/>
    <property type="project" value="UniProtKB-UniRule"/>
</dbReference>
<dbReference type="GO" id="GO:0004252">
    <property type="term" value="F:serine-type endopeptidase activity"/>
    <property type="evidence" value="ECO:0007669"/>
    <property type="project" value="UniProtKB-UniRule"/>
</dbReference>
<dbReference type="GO" id="GO:0034605">
    <property type="term" value="P:cellular response to heat"/>
    <property type="evidence" value="ECO:0007669"/>
    <property type="project" value="UniProtKB-UniRule"/>
</dbReference>
<dbReference type="GO" id="GO:0006515">
    <property type="term" value="P:protein quality control for misfolded or incompletely synthesized proteins"/>
    <property type="evidence" value="ECO:0007669"/>
    <property type="project" value="UniProtKB-UniRule"/>
</dbReference>
<dbReference type="CDD" id="cd19500">
    <property type="entry name" value="RecA-like_Lon"/>
    <property type="match status" value="1"/>
</dbReference>
<dbReference type="FunFam" id="3.40.50.300:FF:000382">
    <property type="entry name" value="Lon protease homolog 2, peroxisomal"/>
    <property type="match status" value="1"/>
</dbReference>
<dbReference type="Gene3D" id="1.10.8.60">
    <property type="match status" value="1"/>
</dbReference>
<dbReference type="Gene3D" id="1.20.5.5270">
    <property type="match status" value="1"/>
</dbReference>
<dbReference type="Gene3D" id="1.20.58.1480">
    <property type="match status" value="1"/>
</dbReference>
<dbReference type="Gene3D" id="3.30.230.10">
    <property type="match status" value="1"/>
</dbReference>
<dbReference type="Gene3D" id="2.30.130.40">
    <property type="entry name" value="LON domain-like"/>
    <property type="match status" value="1"/>
</dbReference>
<dbReference type="Gene3D" id="3.40.50.300">
    <property type="entry name" value="P-loop containing nucleotide triphosphate hydrolases"/>
    <property type="match status" value="1"/>
</dbReference>
<dbReference type="HAMAP" id="MF_01973">
    <property type="entry name" value="lon_bact"/>
    <property type="match status" value="1"/>
</dbReference>
<dbReference type="InterPro" id="IPR003593">
    <property type="entry name" value="AAA+_ATPase"/>
</dbReference>
<dbReference type="InterPro" id="IPR003959">
    <property type="entry name" value="ATPase_AAA_core"/>
</dbReference>
<dbReference type="InterPro" id="IPR027543">
    <property type="entry name" value="Lon_bac"/>
</dbReference>
<dbReference type="InterPro" id="IPR004815">
    <property type="entry name" value="Lon_bac/euk-typ"/>
</dbReference>
<dbReference type="InterPro" id="IPR054594">
    <property type="entry name" value="Lon_lid"/>
</dbReference>
<dbReference type="InterPro" id="IPR008269">
    <property type="entry name" value="Lon_proteolytic"/>
</dbReference>
<dbReference type="InterPro" id="IPR027065">
    <property type="entry name" value="Lon_Prtase"/>
</dbReference>
<dbReference type="InterPro" id="IPR003111">
    <property type="entry name" value="Lon_prtase_N"/>
</dbReference>
<dbReference type="InterPro" id="IPR046336">
    <property type="entry name" value="Lon_prtase_N_sf"/>
</dbReference>
<dbReference type="InterPro" id="IPR027417">
    <property type="entry name" value="P-loop_NTPase"/>
</dbReference>
<dbReference type="InterPro" id="IPR008268">
    <property type="entry name" value="Peptidase_S16_AS"/>
</dbReference>
<dbReference type="InterPro" id="IPR015947">
    <property type="entry name" value="PUA-like_sf"/>
</dbReference>
<dbReference type="InterPro" id="IPR020568">
    <property type="entry name" value="Ribosomal_Su5_D2-typ_SF"/>
</dbReference>
<dbReference type="InterPro" id="IPR014721">
    <property type="entry name" value="Ribsml_uS5_D2-typ_fold_subgr"/>
</dbReference>
<dbReference type="NCBIfam" id="TIGR00763">
    <property type="entry name" value="lon"/>
    <property type="match status" value="1"/>
</dbReference>
<dbReference type="PANTHER" id="PTHR10046">
    <property type="entry name" value="ATP DEPENDENT LON PROTEASE FAMILY MEMBER"/>
    <property type="match status" value="1"/>
</dbReference>
<dbReference type="Pfam" id="PF00004">
    <property type="entry name" value="AAA"/>
    <property type="match status" value="1"/>
</dbReference>
<dbReference type="Pfam" id="PF05362">
    <property type="entry name" value="Lon_C"/>
    <property type="match status" value="1"/>
</dbReference>
<dbReference type="Pfam" id="PF22667">
    <property type="entry name" value="Lon_lid"/>
    <property type="match status" value="1"/>
</dbReference>
<dbReference type="Pfam" id="PF02190">
    <property type="entry name" value="LON_substr_bdg"/>
    <property type="match status" value="1"/>
</dbReference>
<dbReference type="PIRSF" id="PIRSF001174">
    <property type="entry name" value="Lon_proteas"/>
    <property type="match status" value="1"/>
</dbReference>
<dbReference type="PRINTS" id="PR00830">
    <property type="entry name" value="ENDOLAPTASE"/>
</dbReference>
<dbReference type="SMART" id="SM00382">
    <property type="entry name" value="AAA"/>
    <property type="match status" value="1"/>
</dbReference>
<dbReference type="SMART" id="SM00464">
    <property type="entry name" value="LON"/>
    <property type="match status" value="1"/>
</dbReference>
<dbReference type="SUPFAM" id="SSF52540">
    <property type="entry name" value="P-loop containing nucleoside triphosphate hydrolases"/>
    <property type="match status" value="1"/>
</dbReference>
<dbReference type="SUPFAM" id="SSF88697">
    <property type="entry name" value="PUA domain-like"/>
    <property type="match status" value="1"/>
</dbReference>
<dbReference type="SUPFAM" id="SSF54211">
    <property type="entry name" value="Ribosomal protein S5 domain 2-like"/>
    <property type="match status" value="1"/>
</dbReference>
<dbReference type="PROSITE" id="PS51787">
    <property type="entry name" value="LON_N"/>
    <property type="match status" value="1"/>
</dbReference>
<dbReference type="PROSITE" id="PS51786">
    <property type="entry name" value="LON_PROTEOLYTIC"/>
    <property type="match status" value="1"/>
</dbReference>
<dbReference type="PROSITE" id="PS01046">
    <property type="entry name" value="LON_SER"/>
    <property type="match status" value="1"/>
</dbReference>
<sequence>MTDHTKEHENTPSMGFLDGLVNSISQQPKAIEEEIKFDGALPVLPLRNTVLFPDVIVPIGVARQRSIALLESLAPNSPVVFLMQTDADIDAPTPDELHKNGSVGLVLRTLRMPDNSMSVIVQGVKRVVVEAFTQTEPYLAAKVTPKDEEELEGVEFDAYARTTKQLASKIIELSPNSPNEASYAIQSIENTRFLIHFIASNISVPAAEKQKMIEAEGMKARAERLIHFLNREVQVLELSKQIQTKVKTDMDRSQREFILRQQLKTIQQELGEQDAQMQDVEKLREAVEKKNLPEEVTSVVSKEIDKLSRIPQASPDYSVTRNYVDTILALPWGHFSETVINLHEAEKILNQDHYGLGKVKDRILEYLAVLKLKSNMKAPILCFCGPPGVGKTSLGRSIARALGRKFIRISLGGVRDEAEIRGHRRTYIGSMPGRIIQGIKTAGTSNPVFMLDEIDKIGADFRGNPSSALLEVLDPAQNNAFSDHYLEIPYDLSKVMFIATANTLDPIPVPLRDRMEIINLSGYTEYEKLHIAERYLIPRQLEEHGIRPEDVSFDALTTKKIINAYTREAGVRNLERQIANVCRVIAKDIVIRRESDQPDETPITVVTADLKKYLGMEQFYPDVSEPVMLSGVAVGLAWTPVGGDILFIESTVMKGTGRLILTGQLGDVMKESAQAALSYLKSCADYFKIPDEAFRYWDVHVHVPQGAIPKDGPSAGVTILTSLASIYTQRKVKPCIAMTGEITLRGRILPVGGIKEKVLAAKRAGITEILLPEKNEKDVKEALETNGGAFSDVSFKYFHEMDDLIDYVLEPAENGAPQFKVEDKDHTPETTGNESE</sequence>
<reference key="1">
    <citation type="submission" date="2008-06" db="EMBL/GenBank/DDBJ databases">
        <title>Complete sequence of Chloroherpeton thalassium ATCC 35110.</title>
        <authorList>
            <consortium name="US DOE Joint Genome Institute"/>
            <person name="Lucas S."/>
            <person name="Copeland A."/>
            <person name="Lapidus A."/>
            <person name="Glavina del Rio T."/>
            <person name="Dalin E."/>
            <person name="Tice H."/>
            <person name="Bruce D."/>
            <person name="Goodwin L."/>
            <person name="Pitluck S."/>
            <person name="Schmutz J."/>
            <person name="Larimer F."/>
            <person name="Land M."/>
            <person name="Hauser L."/>
            <person name="Kyrpides N."/>
            <person name="Mikhailova N."/>
            <person name="Liu Z."/>
            <person name="Li T."/>
            <person name="Zhao F."/>
            <person name="Overmann J."/>
            <person name="Bryant D.A."/>
            <person name="Richardson P."/>
        </authorList>
    </citation>
    <scope>NUCLEOTIDE SEQUENCE [LARGE SCALE GENOMIC DNA]</scope>
    <source>
        <strain>ATCC 35110 / GB-78</strain>
    </source>
</reference>
<name>LON_CHLT3</name>
<comment type="function">
    <text evidence="1">ATP-dependent serine protease that mediates the selective degradation of mutant and abnormal proteins as well as certain short-lived regulatory proteins. Required for cellular homeostasis and for survival from DNA damage and developmental changes induced by stress. Degrades polypeptides processively to yield small peptide fragments that are 5 to 10 amino acids long. Binds to DNA in a double-stranded, site-specific manner.</text>
</comment>
<comment type="catalytic activity">
    <reaction evidence="1">
        <text>Hydrolysis of proteins in presence of ATP.</text>
        <dbReference type="EC" id="3.4.21.53"/>
    </reaction>
</comment>
<comment type="subunit">
    <text evidence="1">Homohexamer. Organized in a ring with a central cavity.</text>
</comment>
<comment type="subcellular location">
    <subcellularLocation>
        <location evidence="1">Cytoplasm</location>
    </subcellularLocation>
</comment>
<comment type="induction">
    <text evidence="1">By heat shock.</text>
</comment>
<comment type="similarity">
    <text evidence="1">Belongs to the peptidase S16 family.</text>
</comment>
<gene>
    <name evidence="1" type="primary">lon</name>
    <name type="ordered locus">Ctha_1586</name>
</gene>